<comment type="function">
    <text evidence="6">Catalyzes the hydrolytic deamination of dCMP to yield dUMP, the nucleotide substrate for thymidylate synthetase.</text>
</comment>
<comment type="catalytic activity">
    <reaction evidence="6">
        <text>dCMP + H2O + H(+) = dUMP + NH4(+)</text>
        <dbReference type="Rhea" id="RHEA:22924"/>
        <dbReference type="ChEBI" id="CHEBI:15377"/>
        <dbReference type="ChEBI" id="CHEBI:15378"/>
        <dbReference type="ChEBI" id="CHEBI:28938"/>
        <dbReference type="ChEBI" id="CHEBI:57566"/>
        <dbReference type="ChEBI" id="CHEBI:246422"/>
        <dbReference type="EC" id="3.5.4.12"/>
    </reaction>
    <physiologicalReaction direction="left-to-right" evidence="6">
        <dbReference type="Rhea" id="RHEA:22925"/>
    </physiologicalReaction>
</comment>
<comment type="cofactor">
    <cofactor evidence="1">
        <name>Zn(2+)</name>
        <dbReference type="ChEBI" id="CHEBI:29105"/>
    </cofactor>
</comment>
<comment type="activity regulation">
    <text>Allosteric enzyme whose activity is greatly influenced by the end products of its metabolic pathway, dCTP and dTTP.</text>
</comment>
<comment type="miscellaneous">
    <text evidence="3">Present with 1510 molecules/cell in log phase SD medium.</text>
</comment>
<comment type="similarity">
    <text evidence="5">Belongs to the cytidine and deoxycytidylate deaminase family.</text>
</comment>
<organism>
    <name type="scientific">Saccharomyces cerevisiae (strain ATCC 204508 / S288c)</name>
    <name type="common">Baker's yeast</name>
    <dbReference type="NCBI Taxonomy" id="559292"/>
    <lineage>
        <taxon>Eukaryota</taxon>
        <taxon>Fungi</taxon>
        <taxon>Dikarya</taxon>
        <taxon>Ascomycota</taxon>
        <taxon>Saccharomycotina</taxon>
        <taxon>Saccharomycetes</taxon>
        <taxon>Saccharomycetales</taxon>
        <taxon>Saccharomycetaceae</taxon>
        <taxon>Saccharomyces</taxon>
    </lineage>
</organism>
<gene>
    <name evidence="4" type="primary">DCD1</name>
    <name type="ordered locus">YHR144C</name>
</gene>
<reference key="1">
    <citation type="journal article" date="1986" name="Mol. Cell. Biol.">
        <title>Sequence and expression of the dCMP deaminase gene (DCD1) of Saccharomyces cerevisiae.</title>
        <authorList>
            <person name="McIntosh E.M."/>
            <person name="Haynes R.H."/>
        </authorList>
    </citation>
    <scope>NUCLEOTIDE SEQUENCE [GENOMIC DNA]</scope>
    <scope>FUNCTION</scope>
    <scope>CATALYTIC ACTIVITY</scope>
</reference>
<reference key="2">
    <citation type="journal article" date="1994" name="Science">
        <title>Complete nucleotide sequence of Saccharomyces cerevisiae chromosome VIII.</title>
        <authorList>
            <person name="Johnston M."/>
            <person name="Andrews S."/>
            <person name="Brinkman R."/>
            <person name="Cooper J."/>
            <person name="Ding H."/>
            <person name="Dover J."/>
            <person name="Du Z."/>
            <person name="Favello A."/>
            <person name="Fulton L."/>
            <person name="Gattung S."/>
            <person name="Geisel C."/>
            <person name="Kirsten J."/>
            <person name="Kucaba T."/>
            <person name="Hillier L.W."/>
            <person name="Jier M."/>
            <person name="Johnston L."/>
            <person name="Langston Y."/>
            <person name="Latreille P."/>
            <person name="Louis E.J."/>
            <person name="Macri C."/>
            <person name="Mardis E."/>
            <person name="Menezes S."/>
            <person name="Mouser L."/>
            <person name="Nhan M."/>
            <person name="Rifkin L."/>
            <person name="Riles L."/>
            <person name="St Peter H."/>
            <person name="Trevaskis E."/>
            <person name="Vaughan K."/>
            <person name="Vignati D."/>
            <person name="Wilcox L."/>
            <person name="Wohldman P."/>
            <person name="Waterston R."/>
            <person name="Wilson R."/>
            <person name="Vaudin M."/>
        </authorList>
    </citation>
    <scope>NUCLEOTIDE SEQUENCE [LARGE SCALE GENOMIC DNA]</scope>
    <source>
        <strain>ATCC 204508 / S288c</strain>
    </source>
</reference>
<reference key="3">
    <citation type="journal article" date="2014" name="G3 (Bethesda)">
        <title>The reference genome sequence of Saccharomyces cerevisiae: Then and now.</title>
        <authorList>
            <person name="Engel S.R."/>
            <person name="Dietrich F.S."/>
            <person name="Fisk D.G."/>
            <person name="Binkley G."/>
            <person name="Balakrishnan R."/>
            <person name="Costanzo M.C."/>
            <person name="Dwight S.S."/>
            <person name="Hitz B.C."/>
            <person name="Karra K."/>
            <person name="Nash R.S."/>
            <person name="Weng S."/>
            <person name="Wong E.D."/>
            <person name="Lloyd P."/>
            <person name="Skrzypek M.S."/>
            <person name="Miyasato S.R."/>
            <person name="Simison M."/>
            <person name="Cherry J.M."/>
        </authorList>
    </citation>
    <scope>GENOME REANNOTATION</scope>
    <source>
        <strain>ATCC 204508 / S288c</strain>
    </source>
</reference>
<reference key="4">
    <citation type="journal article" date="2003" name="Nature">
        <title>Global analysis of protein expression in yeast.</title>
        <authorList>
            <person name="Ghaemmaghami S."/>
            <person name="Huh W.-K."/>
            <person name="Bower K."/>
            <person name="Howson R.W."/>
            <person name="Belle A."/>
            <person name="Dephoure N."/>
            <person name="O'Shea E.K."/>
            <person name="Weissman J.S."/>
        </authorList>
    </citation>
    <scope>LEVEL OF PROTEIN EXPRESSION [LARGE SCALE ANALYSIS]</scope>
</reference>
<dbReference type="EC" id="3.5.4.12" evidence="6"/>
<dbReference type="EMBL" id="M13010">
    <property type="protein sequence ID" value="AAA34561.1"/>
    <property type="molecule type" value="Genomic_DNA"/>
</dbReference>
<dbReference type="EMBL" id="U10397">
    <property type="protein sequence ID" value="AAB68985.1"/>
    <property type="molecule type" value="Genomic_DNA"/>
</dbReference>
<dbReference type="EMBL" id="BK006934">
    <property type="protein sequence ID" value="DAA06838.1"/>
    <property type="molecule type" value="Genomic_DNA"/>
</dbReference>
<dbReference type="PIR" id="S46762">
    <property type="entry name" value="S46762"/>
</dbReference>
<dbReference type="RefSeq" id="NP_012014.1">
    <property type="nucleotide sequence ID" value="NM_001179275.1"/>
</dbReference>
<dbReference type="SMR" id="P06773"/>
<dbReference type="BioGRID" id="36578">
    <property type="interactions" value="199"/>
</dbReference>
<dbReference type="DIP" id="DIP-4028N"/>
<dbReference type="FunCoup" id="P06773">
    <property type="interactions" value="99"/>
</dbReference>
<dbReference type="IntAct" id="P06773">
    <property type="interactions" value="2"/>
</dbReference>
<dbReference type="MINT" id="P06773"/>
<dbReference type="STRING" id="4932.YHR144C"/>
<dbReference type="iPTMnet" id="P06773"/>
<dbReference type="PaxDb" id="4932-YHR144C"/>
<dbReference type="PeptideAtlas" id="P06773"/>
<dbReference type="EnsemblFungi" id="YHR144C_mRNA">
    <property type="protein sequence ID" value="YHR144C"/>
    <property type="gene ID" value="YHR144C"/>
</dbReference>
<dbReference type="GeneID" id="856548"/>
<dbReference type="KEGG" id="sce:YHR144C"/>
<dbReference type="AGR" id="SGD:S000001187"/>
<dbReference type="SGD" id="S000001187">
    <property type="gene designation" value="DCD1"/>
</dbReference>
<dbReference type="VEuPathDB" id="FungiDB:YHR144C"/>
<dbReference type="eggNOG" id="KOG3127">
    <property type="taxonomic scope" value="Eukaryota"/>
</dbReference>
<dbReference type="GeneTree" id="ENSGT00940000153676"/>
<dbReference type="HOGENOM" id="CLU_047993_0_0_1"/>
<dbReference type="InParanoid" id="P06773"/>
<dbReference type="OMA" id="PPLRPDW"/>
<dbReference type="OrthoDB" id="6710946at2759"/>
<dbReference type="BioCyc" id="MetaCyc:YHR144C-MONOMER"/>
<dbReference type="BioCyc" id="YEAST:YHR144C-MONOMER"/>
<dbReference type="BioGRID-ORCS" id="856548">
    <property type="hits" value="0 hits in 10 CRISPR screens"/>
</dbReference>
<dbReference type="PRO" id="PR:P06773"/>
<dbReference type="Proteomes" id="UP000002311">
    <property type="component" value="Chromosome VIII"/>
</dbReference>
<dbReference type="RNAct" id="P06773">
    <property type="molecule type" value="protein"/>
</dbReference>
<dbReference type="GO" id="GO:0005737">
    <property type="term" value="C:cytoplasm"/>
    <property type="evidence" value="ECO:0007005"/>
    <property type="project" value="SGD"/>
</dbReference>
<dbReference type="GO" id="GO:0004132">
    <property type="term" value="F:dCMP deaminase activity"/>
    <property type="evidence" value="ECO:0000315"/>
    <property type="project" value="SGD"/>
</dbReference>
<dbReference type="GO" id="GO:0008270">
    <property type="term" value="F:zinc ion binding"/>
    <property type="evidence" value="ECO:0007669"/>
    <property type="project" value="InterPro"/>
</dbReference>
<dbReference type="GO" id="GO:0009972">
    <property type="term" value="P:cytidine deamination"/>
    <property type="evidence" value="ECO:0000318"/>
    <property type="project" value="GO_Central"/>
</dbReference>
<dbReference type="GO" id="GO:0006231">
    <property type="term" value="P:dTMP biosynthetic process"/>
    <property type="evidence" value="ECO:0000315"/>
    <property type="project" value="SGD"/>
</dbReference>
<dbReference type="GO" id="GO:0006226">
    <property type="term" value="P:dUMP biosynthetic process"/>
    <property type="evidence" value="ECO:0000315"/>
    <property type="project" value="SGD"/>
</dbReference>
<dbReference type="CDD" id="cd01286">
    <property type="entry name" value="deoxycytidylate_deaminase"/>
    <property type="match status" value="1"/>
</dbReference>
<dbReference type="FunFam" id="3.40.140.10:FF:000035">
    <property type="entry name" value="dCMP deaminase"/>
    <property type="match status" value="1"/>
</dbReference>
<dbReference type="Gene3D" id="3.40.140.10">
    <property type="entry name" value="Cytidine Deaminase, domain 2"/>
    <property type="match status" value="1"/>
</dbReference>
<dbReference type="InterPro" id="IPR016192">
    <property type="entry name" value="APOBEC/CMP_deaminase_Zn-bd"/>
</dbReference>
<dbReference type="InterPro" id="IPR002125">
    <property type="entry name" value="CMP_dCMP_dom"/>
</dbReference>
<dbReference type="InterPro" id="IPR016193">
    <property type="entry name" value="Cytidine_deaminase-like"/>
</dbReference>
<dbReference type="InterPro" id="IPR015517">
    <property type="entry name" value="dCMP_deaminase-rel"/>
</dbReference>
<dbReference type="InterPro" id="IPR035105">
    <property type="entry name" value="Deoxycytidylate_deaminase_dom"/>
</dbReference>
<dbReference type="PANTHER" id="PTHR11086:SF18">
    <property type="entry name" value="DEOXYCYTIDYLATE DEAMINASE"/>
    <property type="match status" value="1"/>
</dbReference>
<dbReference type="PANTHER" id="PTHR11086">
    <property type="entry name" value="DEOXYCYTIDYLATE DEAMINASE-RELATED"/>
    <property type="match status" value="1"/>
</dbReference>
<dbReference type="Pfam" id="PF00383">
    <property type="entry name" value="dCMP_cyt_deam_1"/>
    <property type="match status" value="1"/>
</dbReference>
<dbReference type="SUPFAM" id="SSF53927">
    <property type="entry name" value="Cytidine deaminase-like"/>
    <property type="match status" value="1"/>
</dbReference>
<dbReference type="PROSITE" id="PS00903">
    <property type="entry name" value="CYT_DCMP_DEAMINASES_1"/>
    <property type="match status" value="1"/>
</dbReference>
<dbReference type="PROSITE" id="PS51747">
    <property type="entry name" value="CYT_DCMP_DEAMINASES_2"/>
    <property type="match status" value="1"/>
</dbReference>
<keyword id="KW-0021">Allosteric enzyme</keyword>
<keyword id="KW-0378">Hydrolase</keyword>
<keyword id="KW-0479">Metal-binding</keyword>
<keyword id="KW-0545">Nucleotide biosynthesis</keyword>
<keyword id="KW-1185">Reference proteome</keyword>
<keyword id="KW-0862">Zinc</keyword>
<evidence type="ECO:0000250" key="1"/>
<evidence type="ECO:0000255" key="2">
    <source>
        <dbReference type="PROSITE-ProRule" id="PRU01083"/>
    </source>
</evidence>
<evidence type="ECO:0000269" key="3">
    <source>
    </source>
</evidence>
<evidence type="ECO:0000303" key="4">
    <source>
    </source>
</evidence>
<evidence type="ECO:0000305" key="5"/>
<evidence type="ECO:0000305" key="6">
    <source>
    </source>
</evidence>
<protein>
    <recommendedName>
        <fullName evidence="5">Deoxycytidylate deaminase</fullName>
        <ecNumber evidence="6">3.5.4.12</ecNumber>
    </recommendedName>
    <alternativeName>
        <fullName evidence="4">dCMP deaminase</fullName>
    </alternativeName>
</protein>
<name>DCTD_YEAST</name>
<sequence length="312" mass="35646">MLIGVSGTKFCGCEDVINMLVDHFHFELLNHLDNPEEILDYATKNYTKNSVIFLEKLSLLEKLEKRPFFVHLSIDAPVTTRVALYRKTTQAESLSLEQIIQAIDQHDFQPEGIKLREKSHLRFKIVNEDRRGRRQSLINNITTQLKILDDKEKQMAPLMRPSWDSYFMKLATLAASRSNCMKRRVGCVIVRECRVIATGYNGTPRHLTNCFNGGCPRCNDGDSRNLHTCLCLHAEENALLEAGRDRVGQNATLYCDTCPCLTCSVKIVQTGISEVVYSQSYRMDEESFKVLKNAGITVRQFSFTEEPRIVMI</sequence>
<accession>P06773</accession>
<accession>D3DL94</accession>
<feature type="chain" id="PRO_0000171697" description="Deoxycytidylate deaminase">
    <location>
        <begin position="1"/>
        <end position="312"/>
    </location>
</feature>
<feature type="domain" description="CMP/dCMP-type deaminase" evidence="2">
    <location>
        <begin position="162"/>
        <end position="291"/>
    </location>
</feature>
<feature type="active site" description="Proton donor" evidence="1">
    <location>
        <position position="235"/>
    </location>
</feature>
<feature type="binding site" evidence="1">
    <location>
        <position position="233"/>
    </location>
    <ligand>
        <name>Zn(2+)</name>
        <dbReference type="ChEBI" id="CHEBI:29105"/>
        <note>catalytic</note>
    </ligand>
</feature>
<feature type="binding site" evidence="1">
    <location>
        <position position="260"/>
    </location>
    <ligand>
        <name>Zn(2+)</name>
        <dbReference type="ChEBI" id="CHEBI:29105"/>
        <note>catalytic</note>
    </ligand>
</feature>
<feature type="binding site" evidence="1">
    <location>
        <position position="263"/>
    </location>
    <ligand>
        <name>Zn(2+)</name>
        <dbReference type="ChEBI" id="CHEBI:29105"/>
        <note>catalytic</note>
    </ligand>
</feature>
<feature type="sequence conflict" description="In Ref. 1; AAA34561." evidence="5" ref="1">
    <original>V</original>
    <variation>A</variation>
    <location>
        <position position="78"/>
    </location>
</feature>
<proteinExistence type="evidence at protein level"/>